<protein>
    <recommendedName>
        <fullName evidence="1">DNA replication and repair protein RecF</fullName>
    </recommendedName>
</protein>
<sequence length="364" mass="41656">MKLIKLKLASFRNLQNIELAPGKKFNVFYGNNGQGKTNLLESIYLLATMKSFKQARNAELIAFAGEFALVKGTVERDQVRREIAVLIEKQGKKAKVDAKLMTRLDDFFGNLNVVLFTPEEISMVRGGPDLRRRYLDRAVFTCDLGYLTAYHDYAKILKNRNALLKVNETTGIEVWTEQLVQAALLVIERRKAYLDRIGKLLQGFYSEISGNDETVQIEYRLHGVDERLLAEDPAGALNQALRAHAAEERRRGTTAIGPHRDDLYFGLNGRSARQFASQGQQRSFVLALKMAEIEHITRCFEAPPVLLLDDMTSELDRERNRNLMEFLKKREMQVFITTTSLHNVDIDELQDNRTFRIKEGKILD</sequence>
<accession>B5E7P8</accession>
<dbReference type="EMBL" id="CP001124">
    <property type="protein sequence ID" value="ACH37036.1"/>
    <property type="molecule type" value="Genomic_DNA"/>
</dbReference>
<dbReference type="RefSeq" id="WP_012528445.1">
    <property type="nucleotide sequence ID" value="NC_011146.1"/>
</dbReference>
<dbReference type="SMR" id="B5E7P8"/>
<dbReference type="STRING" id="404380.Gbem_0003"/>
<dbReference type="KEGG" id="gbm:Gbem_0003"/>
<dbReference type="eggNOG" id="COG1195">
    <property type="taxonomic scope" value="Bacteria"/>
</dbReference>
<dbReference type="HOGENOM" id="CLU_040267_0_1_7"/>
<dbReference type="OrthoDB" id="9803889at2"/>
<dbReference type="Proteomes" id="UP000008825">
    <property type="component" value="Chromosome"/>
</dbReference>
<dbReference type="GO" id="GO:0005737">
    <property type="term" value="C:cytoplasm"/>
    <property type="evidence" value="ECO:0007669"/>
    <property type="project" value="UniProtKB-SubCell"/>
</dbReference>
<dbReference type="GO" id="GO:0005524">
    <property type="term" value="F:ATP binding"/>
    <property type="evidence" value="ECO:0007669"/>
    <property type="project" value="UniProtKB-UniRule"/>
</dbReference>
<dbReference type="GO" id="GO:0003697">
    <property type="term" value="F:single-stranded DNA binding"/>
    <property type="evidence" value="ECO:0007669"/>
    <property type="project" value="UniProtKB-UniRule"/>
</dbReference>
<dbReference type="GO" id="GO:0006260">
    <property type="term" value="P:DNA replication"/>
    <property type="evidence" value="ECO:0007669"/>
    <property type="project" value="UniProtKB-UniRule"/>
</dbReference>
<dbReference type="GO" id="GO:0000731">
    <property type="term" value="P:DNA synthesis involved in DNA repair"/>
    <property type="evidence" value="ECO:0007669"/>
    <property type="project" value="TreeGrafter"/>
</dbReference>
<dbReference type="GO" id="GO:0006302">
    <property type="term" value="P:double-strand break repair"/>
    <property type="evidence" value="ECO:0007669"/>
    <property type="project" value="TreeGrafter"/>
</dbReference>
<dbReference type="GO" id="GO:0009432">
    <property type="term" value="P:SOS response"/>
    <property type="evidence" value="ECO:0007669"/>
    <property type="project" value="UniProtKB-UniRule"/>
</dbReference>
<dbReference type="Gene3D" id="3.40.50.300">
    <property type="entry name" value="P-loop containing nucleotide triphosphate hydrolases"/>
    <property type="match status" value="1"/>
</dbReference>
<dbReference type="Gene3D" id="1.20.1050.90">
    <property type="entry name" value="RecF/RecN/SMC, N-terminal domain"/>
    <property type="match status" value="1"/>
</dbReference>
<dbReference type="HAMAP" id="MF_00365">
    <property type="entry name" value="RecF"/>
    <property type="match status" value="1"/>
</dbReference>
<dbReference type="InterPro" id="IPR001238">
    <property type="entry name" value="DNA-binding_RecF"/>
</dbReference>
<dbReference type="InterPro" id="IPR027417">
    <property type="entry name" value="P-loop_NTPase"/>
</dbReference>
<dbReference type="InterPro" id="IPR003395">
    <property type="entry name" value="RecF/RecN/SMC_N"/>
</dbReference>
<dbReference type="InterPro" id="IPR042174">
    <property type="entry name" value="RecF_2"/>
</dbReference>
<dbReference type="NCBIfam" id="TIGR00611">
    <property type="entry name" value="recf"/>
    <property type="match status" value="1"/>
</dbReference>
<dbReference type="PANTHER" id="PTHR32182">
    <property type="entry name" value="DNA REPLICATION AND REPAIR PROTEIN RECF"/>
    <property type="match status" value="1"/>
</dbReference>
<dbReference type="PANTHER" id="PTHR32182:SF0">
    <property type="entry name" value="DNA REPLICATION AND REPAIR PROTEIN RECF"/>
    <property type="match status" value="1"/>
</dbReference>
<dbReference type="Pfam" id="PF02463">
    <property type="entry name" value="SMC_N"/>
    <property type="match status" value="1"/>
</dbReference>
<dbReference type="SUPFAM" id="SSF52540">
    <property type="entry name" value="P-loop containing nucleoside triphosphate hydrolases"/>
    <property type="match status" value="1"/>
</dbReference>
<reference key="1">
    <citation type="submission" date="2008-07" db="EMBL/GenBank/DDBJ databases">
        <title>Complete sequence of Geobacter bemidjiensis BEM.</title>
        <authorList>
            <consortium name="US DOE Joint Genome Institute"/>
            <person name="Lucas S."/>
            <person name="Copeland A."/>
            <person name="Lapidus A."/>
            <person name="Glavina del Rio T."/>
            <person name="Dalin E."/>
            <person name="Tice H."/>
            <person name="Bruce D."/>
            <person name="Goodwin L."/>
            <person name="Pitluck S."/>
            <person name="Kiss H."/>
            <person name="Brettin T."/>
            <person name="Detter J.C."/>
            <person name="Han C."/>
            <person name="Kuske C.R."/>
            <person name="Schmutz J."/>
            <person name="Larimer F."/>
            <person name="Land M."/>
            <person name="Hauser L."/>
            <person name="Kyrpides N."/>
            <person name="Lykidis A."/>
            <person name="Lovley D."/>
            <person name="Richardson P."/>
        </authorList>
    </citation>
    <scope>NUCLEOTIDE SEQUENCE [LARGE SCALE GENOMIC DNA]</scope>
    <source>
        <strain>ATCC BAA-1014 / DSM 16622 / JCM 12645 / Bem</strain>
    </source>
</reference>
<comment type="function">
    <text evidence="1">The RecF protein is involved in DNA metabolism; it is required for DNA replication and normal SOS inducibility. RecF binds preferentially to single-stranded, linear DNA. It also seems to bind ATP.</text>
</comment>
<comment type="subcellular location">
    <subcellularLocation>
        <location evidence="1">Cytoplasm</location>
    </subcellularLocation>
</comment>
<comment type="similarity">
    <text evidence="1">Belongs to the RecF family.</text>
</comment>
<name>RECF_CITBB</name>
<proteinExistence type="inferred from homology"/>
<organism>
    <name type="scientific">Citrifermentans bemidjiense (strain ATCC BAA-1014 / DSM 16622 / JCM 12645 / Bem)</name>
    <name type="common">Geobacter bemidjiensis</name>
    <dbReference type="NCBI Taxonomy" id="404380"/>
    <lineage>
        <taxon>Bacteria</taxon>
        <taxon>Pseudomonadati</taxon>
        <taxon>Thermodesulfobacteriota</taxon>
        <taxon>Desulfuromonadia</taxon>
        <taxon>Geobacterales</taxon>
        <taxon>Geobacteraceae</taxon>
        <taxon>Citrifermentans</taxon>
    </lineage>
</organism>
<evidence type="ECO:0000255" key="1">
    <source>
        <dbReference type="HAMAP-Rule" id="MF_00365"/>
    </source>
</evidence>
<feature type="chain" id="PRO_1000121120" description="DNA replication and repair protein RecF">
    <location>
        <begin position="1"/>
        <end position="364"/>
    </location>
</feature>
<feature type="binding site" evidence="1">
    <location>
        <begin position="30"/>
        <end position="37"/>
    </location>
    <ligand>
        <name>ATP</name>
        <dbReference type="ChEBI" id="CHEBI:30616"/>
    </ligand>
</feature>
<gene>
    <name evidence="1" type="primary">recF</name>
    <name type="ordered locus">Gbem_0003</name>
</gene>
<keyword id="KW-0067">ATP-binding</keyword>
<keyword id="KW-0963">Cytoplasm</keyword>
<keyword id="KW-0227">DNA damage</keyword>
<keyword id="KW-0234">DNA repair</keyword>
<keyword id="KW-0235">DNA replication</keyword>
<keyword id="KW-0238">DNA-binding</keyword>
<keyword id="KW-0547">Nucleotide-binding</keyword>
<keyword id="KW-1185">Reference proteome</keyword>
<keyword id="KW-0742">SOS response</keyword>